<feature type="chain" id="PRO_0000429023" description="Sporulation sigma-E factor-processing peptidase">
    <location>
        <begin position="1"/>
        <end position="307"/>
    </location>
</feature>
<feature type="transmembrane region" description="Helical" evidence="2">
    <location>
        <begin position="7"/>
        <end position="27"/>
    </location>
</feature>
<feature type="transmembrane region" description="Helical" evidence="2">
    <location>
        <begin position="36"/>
        <end position="56"/>
    </location>
</feature>
<feature type="transmembrane region" description="Helical" evidence="2">
    <location>
        <begin position="57"/>
        <end position="77"/>
    </location>
</feature>
<feature type="transmembrane region" description="Helical" evidence="2">
    <location>
        <begin position="89"/>
        <end position="109"/>
    </location>
</feature>
<feature type="transmembrane region" description="Helical" evidence="2">
    <location>
        <begin position="127"/>
        <end position="147"/>
    </location>
</feature>
<feature type="active site" evidence="1">
    <location>
        <position position="183"/>
    </location>
</feature>
<feature type="sequence conflict" description="In Ref. 1; AAB94055." evidence="4" ref="1">
    <original>V</original>
    <variation>A</variation>
    <location>
        <position position="25"/>
    </location>
</feature>
<evidence type="ECO:0000250" key="1">
    <source>
        <dbReference type="UniProtKB" id="P13801"/>
    </source>
</evidence>
<evidence type="ECO:0000255" key="2"/>
<evidence type="ECO:0000269" key="3">
    <source>
    </source>
</evidence>
<evidence type="ECO:0000305" key="4"/>
<evidence type="ECO:0000312" key="5">
    <source>
        <dbReference type="EMBL" id="AAB94055.1"/>
    </source>
</evidence>
<evidence type="ECO:0000312" key="6">
    <source>
        <dbReference type="EMBL" id="ADE71281.1"/>
    </source>
</evidence>
<proteinExistence type="inferred from homology"/>
<keyword id="KW-0064">Aspartyl protease</keyword>
<keyword id="KW-1003">Cell membrane</keyword>
<keyword id="KW-0378">Hydrolase</keyword>
<keyword id="KW-0472">Membrane</keyword>
<keyword id="KW-0645">Protease</keyword>
<keyword id="KW-1185">Reference proteome</keyword>
<keyword id="KW-0749">Sporulation</keyword>
<keyword id="KW-0812">Transmembrane</keyword>
<keyword id="KW-1133">Transmembrane helix</keyword>
<dbReference type="EC" id="3.4.23.-" evidence="1 6"/>
<dbReference type="EMBL" id="AF017181">
    <property type="protein sequence ID" value="AAB94055.1"/>
    <property type="molecule type" value="Genomic_DNA"/>
</dbReference>
<dbReference type="EMBL" id="CP001983">
    <property type="protein sequence ID" value="ADE71281.1"/>
    <property type="status" value="ALT_INIT"/>
    <property type="molecule type" value="Genomic_DNA"/>
</dbReference>
<dbReference type="RefSeq" id="WP_041816622.1">
    <property type="nucleotide sequence ID" value="NC_014019.1"/>
</dbReference>
<dbReference type="STRING" id="545693.BMQ_4271"/>
<dbReference type="MEROPS" id="A36.001"/>
<dbReference type="KEGG" id="bmq:BMQ_4271"/>
<dbReference type="eggNOG" id="ENOG50301AF">
    <property type="taxonomic scope" value="Bacteria"/>
</dbReference>
<dbReference type="HOGENOM" id="CLU_059158_0_0_9"/>
<dbReference type="Proteomes" id="UP000000935">
    <property type="component" value="Chromosome"/>
</dbReference>
<dbReference type="GO" id="GO:0005886">
    <property type="term" value="C:plasma membrane"/>
    <property type="evidence" value="ECO:0007669"/>
    <property type="project" value="UniProtKB-SubCell"/>
</dbReference>
<dbReference type="GO" id="GO:0004190">
    <property type="term" value="F:aspartic-type endopeptidase activity"/>
    <property type="evidence" value="ECO:0007669"/>
    <property type="project" value="UniProtKB-KW"/>
</dbReference>
<dbReference type="GO" id="GO:0030436">
    <property type="term" value="P:asexual sporulation"/>
    <property type="evidence" value="ECO:0007669"/>
    <property type="project" value="InterPro"/>
</dbReference>
<dbReference type="GO" id="GO:0006508">
    <property type="term" value="P:proteolysis"/>
    <property type="evidence" value="ECO:0007669"/>
    <property type="project" value="UniProtKB-KW"/>
</dbReference>
<dbReference type="GO" id="GO:0030435">
    <property type="term" value="P:sporulation resulting in formation of a cellular spore"/>
    <property type="evidence" value="ECO:0007669"/>
    <property type="project" value="UniProtKB-KW"/>
</dbReference>
<dbReference type="InterPro" id="IPR005081">
    <property type="entry name" value="SpoIIGA"/>
</dbReference>
<dbReference type="NCBIfam" id="TIGR02854">
    <property type="entry name" value="spore_II_GA"/>
    <property type="match status" value="1"/>
</dbReference>
<dbReference type="Pfam" id="PF03419">
    <property type="entry name" value="Peptidase_U4"/>
    <property type="match status" value="1"/>
</dbReference>
<dbReference type="PIRSF" id="PIRSF018571">
    <property type="entry name" value="SpoIIGA"/>
    <property type="match status" value="1"/>
</dbReference>
<accession>D5DQW6</accession>
<accession>O52061</accession>
<reference evidence="4 5" key="1">
    <citation type="journal article" date="1998" name="Mol. Microbiol.">
        <title>The Bacillus SpoIIGA protein is targeted to sites of spore septum formation in a SpoIIE-independent manner.</title>
        <authorList>
            <person name="Fawcett P."/>
            <person name="Melnikov A."/>
            <person name="Youngman P."/>
        </authorList>
    </citation>
    <scope>NUCLEOTIDE SEQUENCE [GENOMIC DNA]</scope>
    <scope>SUBCELLULAR LOCATION</scope>
    <source>
        <strain evidence="3">ATCC 12872 / DSM 1804 / QMB1551</strain>
    </source>
</reference>
<reference evidence="6" key="2">
    <citation type="journal article" date="2011" name="J. Bacteriol.">
        <title>Genome sequences of the biotechnologically important Bacillus megaterium strains QM B1551 and DSM319.</title>
        <authorList>
            <person name="Eppinger M."/>
            <person name="Bunk B."/>
            <person name="Johns M.A."/>
            <person name="Edirisinghe J.N."/>
            <person name="Kutumbaka K.K."/>
            <person name="Koenig S.S."/>
            <person name="Creasy H.H."/>
            <person name="Rosovitz M.J."/>
            <person name="Riley D.R."/>
            <person name="Daugherty S."/>
            <person name="Martin M."/>
            <person name="Elbourne L.D."/>
            <person name="Paulsen I."/>
            <person name="Biedendieck R."/>
            <person name="Braun C."/>
            <person name="Grayburn S."/>
            <person name="Dhingra S."/>
            <person name="Lukyanchuk V."/>
            <person name="Ball B."/>
            <person name="Ul-Qamar R."/>
            <person name="Seibel J."/>
            <person name="Bremer E."/>
            <person name="Jahn D."/>
            <person name="Ravel J."/>
            <person name="Vary P.S."/>
        </authorList>
    </citation>
    <scope>NUCLEOTIDE SEQUENCE [LARGE SCALE GENOMIC DNA]</scope>
    <source>
        <strain>ATCC 12872 / DSM 1804 / QMB1551</strain>
    </source>
</reference>
<name>SP2G_PRIM1</name>
<sequence length="307" mass="35146">MPIYLDLIWMLNFGLDTILLMLCAVVLKRNYKWWRLLLGGFIGSLIVLLMFTPFSHLMVHPAIKILFSFFMVLMTFGYKRLRFFFENLLTFYFATFVVGGGLMGVHFLFQDQFLVLNQMVDTKSPQFGDPISWIFVLIGFPLLSYFSKTRVDDLRIKNITFDQLVDVEIILNEQTLSMKGLIDSGNQLVDPLTKTPVMIVTADSLKEILPEGLMELSKNVQSFSHSEDIDQEWYSKVRFVPYRSVGQANQLLLALKPDMVRLVHQSNTIEVTKVLVGISHTTLSVEKQYECIVHPKLIVIGEVSSAS</sequence>
<protein>
    <recommendedName>
        <fullName evidence="1 6">Sporulation sigma-E factor-processing peptidase</fullName>
        <ecNumber evidence="1 6">3.4.23.-</ecNumber>
    </recommendedName>
    <alternativeName>
        <fullName evidence="1">Membrane-associated aspartic protease</fullName>
    </alternativeName>
    <alternativeName>
        <fullName evidence="1">Stage II sporulation protein GA</fullName>
    </alternativeName>
</protein>
<gene>
    <name evidence="6" type="primary">spoIIGA</name>
    <name type="ordered locus">BMQ_4271</name>
</gene>
<organism>
    <name type="scientific">Priestia megaterium (strain ATCC 12872 / QMB1551)</name>
    <name type="common">Bacillus megaterium</name>
    <dbReference type="NCBI Taxonomy" id="545693"/>
    <lineage>
        <taxon>Bacteria</taxon>
        <taxon>Bacillati</taxon>
        <taxon>Bacillota</taxon>
        <taxon>Bacilli</taxon>
        <taxon>Bacillales</taxon>
        <taxon>Bacillaceae</taxon>
        <taxon>Priestia</taxon>
    </lineage>
</organism>
<comment type="function">
    <text evidence="1">Probable aspartic protease that is responsible for the proteolytic cleavage of the RNA polymerase sigma E factor (SigE/spoIIGB) to yield the active peptide in the mother cell during sporulation. Responds to a signal from the forespore that is triggered by the extracellular signal protein SpoIIR (By similarity).</text>
</comment>
<comment type="subunit">
    <text evidence="1">Self-associates. Interacts with SigE. Interacts with SpoIIR (By similarity).</text>
</comment>
<comment type="subcellular location">
    <subcellularLocation>
        <location evidence="3">Cell membrane</location>
        <topology evidence="3">Multi-pass membrane protein</topology>
    </subcellularLocation>
    <text evidence="3">Localized to the sporulation septum. Early in sporulating cells localized in an annulus at the septal periphery and later localized uniformly throughout the septa.</text>
</comment>
<comment type="similarity">
    <text evidence="2">Belongs to the peptidase U4 family.</text>
</comment>
<comment type="sequence caution" evidence="4">
    <conflict type="erroneous initiation">
        <sequence resource="EMBL-CDS" id="ADE71281"/>
    </conflict>
    <text>Truncated N-terminus.</text>
</comment>